<dbReference type="EMBL" id="BX842654">
    <property type="protein sequence ID" value="CAE80757.1"/>
    <property type="molecule type" value="Genomic_DNA"/>
</dbReference>
<dbReference type="RefSeq" id="WP_011165361.1">
    <property type="nucleotide sequence ID" value="NC_005363.1"/>
</dbReference>
<dbReference type="SMR" id="Q6MJ06"/>
<dbReference type="STRING" id="264462.Bd2987"/>
<dbReference type="GeneID" id="93013847"/>
<dbReference type="KEGG" id="bba:Bd2987"/>
<dbReference type="eggNOG" id="COG0222">
    <property type="taxonomic scope" value="Bacteria"/>
</dbReference>
<dbReference type="HOGENOM" id="CLU_086499_3_2_7"/>
<dbReference type="Proteomes" id="UP000008080">
    <property type="component" value="Chromosome"/>
</dbReference>
<dbReference type="GO" id="GO:0022625">
    <property type="term" value="C:cytosolic large ribosomal subunit"/>
    <property type="evidence" value="ECO:0007669"/>
    <property type="project" value="TreeGrafter"/>
</dbReference>
<dbReference type="GO" id="GO:0003729">
    <property type="term" value="F:mRNA binding"/>
    <property type="evidence" value="ECO:0007669"/>
    <property type="project" value="TreeGrafter"/>
</dbReference>
<dbReference type="GO" id="GO:0003735">
    <property type="term" value="F:structural constituent of ribosome"/>
    <property type="evidence" value="ECO:0007669"/>
    <property type="project" value="InterPro"/>
</dbReference>
<dbReference type="GO" id="GO:0006412">
    <property type="term" value="P:translation"/>
    <property type="evidence" value="ECO:0007669"/>
    <property type="project" value="UniProtKB-UniRule"/>
</dbReference>
<dbReference type="CDD" id="cd00387">
    <property type="entry name" value="Ribosomal_L7_L12"/>
    <property type="match status" value="1"/>
</dbReference>
<dbReference type="FunFam" id="3.30.1390.10:FF:000001">
    <property type="entry name" value="50S ribosomal protein L7/L12"/>
    <property type="match status" value="1"/>
</dbReference>
<dbReference type="Gene3D" id="3.30.1390.10">
    <property type="match status" value="1"/>
</dbReference>
<dbReference type="Gene3D" id="1.20.5.710">
    <property type="entry name" value="Single helix bin"/>
    <property type="match status" value="1"/>
</dbReference>
<dbReference type="HAMAP" id="MF_00368">
    <property type="entry name" value="Ribosomal_bL12"/>
    <property type="match status" value="1"/>
</dbReference>
<dbReference type="InterPro" id="IPR000206">
    <property type="entry name" value="Ribosomal_bL12"/>
</dbReference>
<dbReference type="InterPro" id="IPR013823">
    <property type="entry name" value="Ribosomal_bL12_C"/>
</dbReference>
<dbReference type="InterPro" id="IPR014719">
    <property type="entry name" value="Ribosomal_bL12_C/ClpS-like"/>
</dbReference>
<dbReference type="InterPro" id="IPR008932">
    <property type="entry name" value="Ribosomal_bL12_oligo"/>
</dbReference>
<dbReference type="InterPro" id="IPR036235">
    <property type="entry name" value="Ribosomal_bL12_oligo_N_sf"/>
</dbReference>
<dbReference type="NCBIfam" id="TIGR00855">
    <property type="entry name" value="L12"/>
    <property type="match status" value="1"/>
</dbReference>
<dbReference type="PANTHER" id="PTHR45987">
    <property type="entry name" value="39S RIBOSOMAL PROTEIN L12"/>
    <property type="match status" value="1"/>
</dbReference>
<dbReference type="PANTHER" id="PTHR45987:SF4">
    <property type="entry name" value="LARGE RIBOSOMAL SUBUNIT PROTEIN BL12M"/>
    <property type="match status" value="1"/>
</dbReference>
<dbReference type="Pfam" id="PF00542">
    <property type="entry name" value="Ribosomal_L12"/>
    <property type="match status" value="1"/>
</dbReference>
<dbReference type="Pfam" id="PF16320">
    <property type="entry name" value="Ribosomal_L12_N"/>
    <property type="match status" value="1"/>
</dbReference>
<dbReference type="SUPFAM" id="SSF54736">
    <property type="entry name" value="ClpS-like"/>
    <property type="match status" value="1"/>
</dbReference>
<dbReference type="SUPFAM" id="SSF48300">
    <property type="entry name" value="Ribosomal protein L7/12, oligomerisation (N-terminal) domain"/>
    <property type="match status" value="1"/>
</dbReference>
<gene>
    <name evidence="1" type="primary">rplL</name>
    <name type="ordered locus">Bd2987</name>
</gene>
<evidence type="ECO:0000255" key="1">
    <source>
        <dbReference type="HAMAP-Rule" id="MF_00368"/>
    </source>
</evidence>
<evidence type="ECO:0000305" key="2"/>
<protein>
    <recommendedName>
        <fullName evidence="1">Large ribosomal subunit protein bL12</fullName>
    </recommendedName>
    <alternativeName>
        <fullName evidence="2">50S ribosomal protein L7/L12</fullName>
    </alternativeName>
</protein>
<comment type="function">
    <text evidence="1">Forms part of the ribosomal stalk which helps the ribosome interact with GTP-bound translation factors. Is thus essential for accurate translation.</text>
</comment>
<comment type="subunit">
    <text evidence="1">Homodimer. Part of the ribosomal stalk of the 50S ribosomal subunit. Forms a multimeric L10(L12)X complex, where L10 forms an elongated spine to which 2 to 4 L12 dimers bind in a sequential fashion. Binds GTP-bound translation factors.</text>
</comment>
<comment type="similarity">
    <text evidence="1">Belongs to the bacterial ribosomal protein bL12 family.</text>
</comment>
<reference key="1">
    <citation type="journal article" date="2004" name="Science">
        <title>A predator unmasked: life cycle of Bdellovibrio bacteriovorus from a genomic perspective.</title>
        <authorList>
            <person name="Rendulic S."/>
            <person name="Jagtap P."/>
            <person name="Rosinus A."/>
            <person name="Eppinger M."/>
            <person name="Baar C."/>
            <person name="Lanz C."/>
            <person name="Keller H."/>
            <person name="Lambert C."/>
            <person name="Evans K.J."/>
            <person name="Goesmann A."/>
            <person name="Meyer F."/>
            <person name="Sockett R.E."/>
            <person name="Schuster S.C."/>
        </authorList>
    </citation>
    <scope>NUCLEOTIDE SEQUENCE [LARGE SCALE GENOMIC DNA]</scope>
    <source>
        <strain>ATCC 15356 / DSM 50701 / NCIMB 9529 / HD100</strain>
    </source>
</reference>
<sequence length="122" mass="12392">MSLTNDQIVEALSAKTVLEIAELVKTLEEKWGVSAAAPVAAAAAGPAAAVEEKTAFDVILVDAGANKINVIKEVRGLTGLGLAEAKALVEAGNKAVKEGATKEDAEKIKKALEAAGAKVTVK</sequence>
<name>RL7_BDEBA</name>
<feature type="chain" id="PRO_0000243390" description="Large ribosomal subunit protein bL12">
    <location>
        <begin position="1"/>
        <end position="122"/>
    </location>
</feature>
<keyword id="KW-1185">Reference proteome</keyword>
<keyword id="KW-0687">Ribonucleoprotein</keyword>
<keyword id="KW-0689">Ribosomal protein</keyword>
<proteinExistence type="inferred from homology"/>
<accession>Q6MJ06</accession>
<organism>
    <name type="scientific">Bdellovibrio bacteriovorus (strain ATCC 15356 / DSM 50701 / NCIMB 9529 / HD100)</name>
    <dbReference type="NCBI Taxonomy" id="264462"/>
    <lineage>
        <taxon>Bacteria</taxon>
        <taxon>Pseudomonadati</taxon>
        <taxon>Bdellovibrionota</taxon>
        <taxon>Bdellovibrionia</taxon>
        <taxon>Bdellovibrionales</taxon>
        <taxon>Pseudobdellovibrionaceae</taxon>
        <taxon>Bdellovibrio</taxon>
    </lineage>
</organism>